<evidence type="ECO:0000255" key="1">
    <source>
        <dbReference type="HAMAP-Rule" id="MF_00183"/>
    </source>
</evidence>
<feature type="chain" id="PRO_0000163685" description="1-deoxy-D-xylulose 5-phosphate reductoisomerase">
    <location>
        <begin position="1"/>
        <end position="394"/>
    </location>
</feature>
<feature type="binding site" evidence="1">
    <location>
        <position position="28"/>
    </location>
    <ligand>
        <name>NADPH</name>
        <dbReference type="ChEBI" id="CHEBI:57783"/>
    </ligand>
</feature>
<feature type="binding site" evidence="1">
    <location>
        <position position="29"/>
    </location>
    <ligand>
        <name>NADPH</name>
        <dbReference type="ChEBI" id="CHEBI:57783"/>
    </ligand>
</feature>
<feature type="binding site" evidence="1">
    <location>
        <position position="30"/>
    </location>
    <ligand>
        <name>NADPH</name>
        <dbReference type="ChEBI" id="CHEBI:57783"/>
    </ligand>
</feature>
<feature type="binding site" evidence="1">
    <location>
        <position position="31"/>
    </location>
    <ligand>
        <name>NADPH</name>
        <dbReference type="ChEBI" id="CHEBI:57783"/>
    </ligand>
</feature>
<feature type="binding site" evidence="1">
    <location>
        <position position="57"/>
    </location>
    <ligand>
        <name>NADPH</name>
        <dbReference type="ChEBI" id="CHEBI:57783"/>
    </ligand>
</feature>
<feature type="binding site" evidence="1">
    <location>
        <position position="133"/>
    </location>
    <ligand>
        <name>NADPH</name>
        <dbReference type="ChEBI" id="CHEBI:57783"/>
    </ligand>
</feature>
<feature type="binding site" evidence="1">
    <location>
        <position position="134"/>
    </location>
    <ligand>
        <name>1-deoxy-D-xylulose 5-phosphate</name>
        <dbReference type="ChEBI" id="CHEBI:57792"/>
    </ligand>
</feature>
<feature type="binding site" evidence="1">
    <location>
        <position position="135"/>
    </location>
    <ligand>
        <name>NADPH</name>
        <dbReference type="ChEBI" id="CHEBI:57783"/>
    </ligand>
</feature>
<feature type="binding site" evidence="1">
    <location>
        <position position="157"/>
    </location>
    <ligand>
        <name>Mn(2+)</name>
        <dbReference type="ChEBI" id="CHEBI:29035"/>
    </ligand>
</feature>
<feature type="binding site" evidence="1">
    <location>
        <position position="158"/>
    </location>
    <ligand>
        <name>1-deoxy-D-xylulose 5-phosphate</name>
        <dbReference type="ChEBI" id="CHEBI:57792"/>
    </ligand>
</feature>
<feature type="binding site" evidence="1">
    <location>
        <position position="159"/>
    </location>
    <ligand>
        <name>1-deoxy-D-xylulose 5-phosphate</name>
        <dbReference type="ChEBI" id="CHEBI:57792"/>
    </ligand>
</feature>
<feature type="binding site" evidence="1">
    <location>
        <position position="159"/>
    </location>
    <ligand>
        <name>Mn(2+)</name>
        <dbReference type="ChEBI" id="CHEBI:29035"/>
    </ligand>
</feature>
<feature type="binding site" evidence="1">
    <location>
        <position position="183"/>
    </location>
    <ligand>
        <name>1-deoxy-D-xylulose 5-phosphate</name>
        <dbReference type="ChEBI" id="CHEBI:57792"/>
    </ligand>
</feature>
<feature type="binding site" evidence="1">
    <location>
        <position position="206"/>
    </location>
    <ligand>
        <name>1-deoxy-D-xylulose 5-phosphate</name>
        <dbReference type="ChEBI" id="CHEBI:57792"/>
    </ligand>
</feature>
<feature type="binding site" evidence="1">
    <location>
        <position position="212"/>
    </location>
    <ligand>
        <name>NADPH</name>
        <dbReference type="ChEBI" id="CHEBI:57783"/>
    </ligand>
</feature>
<feature type="binding site" evidence="1">
    <location>
        <position position="219"/>
    </location>
    <ligand>
        <name>1-deoxy-D-xylulose 5-phosphate</name>
        <dbReference type="ChEBI" id="CHEBI:57792"/>
    </ligand>
</feature>
<feature type="binding site" evidence="1">
    <location>
        <position position="224"/>
    </location>
    <ligand>
        <name>1-deoxy-D-xylulose 5-phosphate</name>
        <dbReference type="ChEBI" id="CHEBI:57792"/>
    </ligand>
</feature>
<feature type="binding site" evidence="1">
    <location>
        <position position="225"/>
    </location>
    <ligand>
        <name>1-deoxy-D-xylulose 5-phosphate</name>
        <dbReference type="ChEBI" id="CHEBI:57792"/>
    </ligand>
</feature>
<feature type="binding site" evidence="1">
    <location>
        <position position="228"/>
    </location>
    <ligand>
        <name>1-deoxy-D-xylulose 5-phosphate</name>
        <dbReference type="ChEBI" id="CHEBI:57792"/>
    </ligand>
</feature>
<feature type="binding site" evidence="1">
    <location>
        <position position="228"/>
    </location>
    <ligand>
        <name>Mn(2+)</name>
        <dbReference type="ChEBI" id="CHEBI:29035"/>
    </ligand>
</feature>
<gene>
    <name evidence="1" type="primary">dxr</name>
    <name type="ordered locus">NFA_41200</name>
</gene>
<name>DXR_NOCFA</name>
<comment type="function">
    <text evidence="1">Catalyzes the NADPH-dependent rearrangement and reduction of 1-deoxy-D-xylulose-5-phosphate (DXP) to 2-C-methyl-D-erythritol 4-phosphate (MEP).</text>
</comment>
<comment type="catalytic activity">
    <reaction evidence="1">
        <text>2-C-methyl-D-erythritol 4-phosphate + NADP(+) = 1-deoxy-D-xylulose 5-phosphate + NADPH + H(+)</text>
        <dbReference type="Rhea" id="RHEA:13717"/>
        <dbReference type="ChEBI" id="CHEBI:15378"/>
        <dbReference type="ChEBI" id="CHEBI:57783"/>
        <dbReference type="ChEBI" id="CHEBI:57792"/>
        <dbReference type="ChEBI" id="CHEBI:58262"/>
        <dbReference type="ChEBI" id="CHEBI:58349"/>
        <dbReference type="EC" id="1.1.1.267"/>
    </reaction>
    <physiologicalReaction direction="right-to-left" evidence="1">
        <dbReference type="Rhea" id="RHEA:13719"/>
    </physiologicalReaction>
</comment>
<comment type="cofactor">
    <cofactor evidence="1">
        <name>Mg(2+)</name>
        <dbReference type="ChEBI" id="CHEBI:18420"/>
    </cofactor>
    <cofactor evidence="1">
        <name>Mn(2+)</name>
        <dbReference type="ChEBI" id="CHEBI:29035"/>
    </cofactor>
</comment>
<comment type="pathway">
    <text evidence="1">Isoprenoid biosynthesis; isopentenyl diphosphate biosynthesis via DXP pathway; isopentenyl diphosphate from 1-deoxy-D-xylulose 5-phosphate: step 1/6.</text>
</comment>
<comment type="similarity">
    <text evidence="1">Belongs to the DXR family.</text>
</comment>
<dbReference type="EC" id="1.1.1.267" evidence="1"/>
<dbReference type="EMBL" id="AP006618">
    <property type="protein sequence ID" value="BAD58969.1"/>
    <property type="molecule type" value="Genomic_DNA"/>
</dbReference>
<dbReference type="SMR" id="Q5YS72"/>
<dbReference type="STRING" id="247156.NFA_41200"/>
<dbReference type="KEGG" id="nfa:NFA_41200"/>
<dbReference type="eggNOG" id="COG0743">
    <property type="taxonomic scope" value="Bacteria"/>
</dbReference>
<dbReference type="HOGENOM" id="CLU_035714_4_0_11"/>
<dbReference type="UniPathway" id="UPA00056">
    <property type="reaction ID" value="UER00092"/>
</dbReference>
<dbReference type="Proteomes" id="UP000006820">
    <property type="component" value="Chromosome"/>
</dbReference>
<dbReference type="GO" id="GO:0030604">
    <property type="term" value="F:1-deoxy-D-xylulose-5-phosphate reductoisomerase activity"/>
    <property type="evidence" value="ECO:0007669"/>
    <property type="project" value="UniProtKB-UniRule"/>
</dbReference>
<dbReference type="GO" id="GO:0030145">
    <property type="term" value="F:manganese ion binding"/>
    <property type="evidence" value="ECO:0007669"/>
    <property type="project" value="TreeGrafter"/>
</dbReference>
<dbReference type="GO" id="GO:0070402">
    <property type="term" value="F:NADPH binding"/>
    <property type="evidence" value="ECO:0007669"/>
    <property type="project" value="InterPro"/>
</dbReference>
<dbReference type="GO" id="GO:0051484">
    <property type="term" value="P:isopentenyl diphosphate biosynthetic process, methylerythritol 4-phosphate pathway involved in terpenoid biosynthetic process"/>
    <property type="evidence" value="ECO:0007669"/>
    <property type="project" value="TreeGrafter"/>
</dbReference>
<dbReference type="FunFam" id="3.40.50.720:FF:000045">
    <property type="entry name" value="1-deoxy-D-xylulose 5-phosphate reductoisomerase"/>
    <property type="match status" value="1"/>
</dbReference>
<dbReference type="Gene3D" id="1.10.1740.10">
    <property type="match status" value="1"/>
</dbReference>
<dbReference type="Gene3D" id="3.40.50.720">
    <property type="entry name" value="NAD(P)-binding Rossmann-like Domain"/>
    <property type="match status" value="1"/>
</dbReference>
<dbReference type="HAMAP" id="MF_00183">
    <property type="entry name" value="DXP_reductoisom"/>
    <property type="match status" value="1"/>
</dbReference>
<dbReference type="InterPro" id="IPR003821">
    <property type="entry name" value="DXP_reductoisomerase"/>
</dbReference>
<dbReference type="InterPro" id="IPR013644">
    <property type="entry name" value="DXP_reductoisomerase_C"/>
</dbReference>
<dbReference type="InterPro" id="IPR013512">
    <property type="entry name" value="DXP_reductoisomerase_N"/>
</dbReference>
<dbReference type="InterPro" id="IPR026877">
    <property type="entry name" value="DXPR_C"/>
</dbReference>
<dbReference type="InterPro" id="IPR036169">
    <property type="entry name" value="DXPR_C_sf"/>
</dbReference>
<dbReference type="InterPro" id="IPR036291">
    <property type="entry name" value="NAD(P)-bd_dom_sf"/>
</dbReference>
<dbReference type="NCBIfam" id="TIGR00243">
    <property type="entry name" value="Dxr"/>
    <property type="match status" value="1"/>
</dbReference>
<dbReference type="PANTHER" id="PTHR30525">
    <property type="entry name" value="1-DEOXY-D-XYLULOSE 5-PHOSPHATE REDUCTOISOMERASE"/>
    <property type="match status" value="1"/>
</dbReference>
<dbReference type="PANTHER" id="PTHR30525:SF0">
    <property type="entry name" value="1-DEOXY-D-XYLULOSE 5-PHOSPHATE REDUCTOISOMERASE, CHLOROPLASTIC"/>
    <property type="match status" value="1"/>
</dbReference>
<dbReference type="Pfam" id="PF08436">
    <property type="entry name" value="DXP_redisom_C"/>
    <property type="match status" value="1"/>
</dbReference>
<dbReference type="Pfam" id="PF02670">
    <property type="entry name" value="DXP_reductoisom"/>
    <property type="match status" value="1"/>
</dbReference>
<dbReference type="Pfam" id="PF13288">
    <property type="entry name" value="DXPR_C"/>
    <property type="match status" value="1"/>
</dbReference>
<dbReference type="PIRSF" id="PIRSF006205">
    <property type="entry name" value="Dxp_reductismrs"/>
    <property type="match status" value="1"/>
</dbReference>
<dbReference type="SUPFAM" id="SSF69055">
    <property type="entry name" value="1-deoxy-D-xylulose-5-phosphate reductoisomerase, C-terminal domain"/>
    <property type="match status" value="1"/>
</dbReference>
<dbReference type="SUPFAM" id="SSF55347">
    <property type="entry name" value="Glyceraldehyde-3-phosphate dehydrogenase-like, C-terminal domain"/>
    <property type="match status" value="1"/>
</dbReference>
<dbReference type="SUPFAM" id="SSF51735">
    <property type="entry name" value="NAD(P)-binding Rossmann-fold domains"/>
    <property type="match status" value="1"/>
</dbReference>
<reference key="1">
    <citation type="journal article" date="2004" name="Proc. Natl. Acad. Sci. U.S.A.">
        <title>The complete genomic sequence of Nocardia farcinica IFM 10152.</title>
        <authorList>
            <person name="Ishikawa J."/>
            <person name="Yamashita A."/>
            <person name="Mikami Y."/>
            <person name="Hoshino Y."/>
            <person name="Kurita H."/>
            <person name="Hotta K."/>
            <person name="Shiba T."/>
            <person name="Hattori M."/>
        </authorList>
    </citation>
    <scope>NUCLEOTIDE SEQUENCE [LARGE SCALE GENOMIC DNA]</scope>
    <source>
        <strain>IFM 10152</strain>
    </source>
</reference>
<sequence>MRPPSRCPGMRHNDGVSDIVRVLLLGSTGSIGTQALEVIAANPDKFEVVGLAARGGNPALLAEQMAATGTRNVAVADPAAGAALDIKLAGPHAVTELVRRTEADVVLNALVGSLGLEPTLATLTAGTRLALANKESLVAGGSLVTRAAAPGQIVPVDSEHSALAQCLRGGRADEVDRLVLTASGGPFRGWTAQMLESVNPEAAKAHPTWSMGLMNTLNSASLVNKGLELIETHLLFGIPYDRIDVTVHPQSIVHSMVTFVDGSTLAQASPPDMKLPIALALGWPDRVPGAAAACDFSTASTWTFEPVDTEVFPAVELARQAGQAGGSVTAVYNAANEVAVQAFLDGRIRFPEIVRTVARAVEAADRWRAEPETVEDVLAADRWARGRAAELVGA</sequence>
<keyword id="KW-0414">Isoprene biosynthesis</keyword>
<keyword id="KW-0464">Manganese</keyword>
<keyword id="KW-0479">Metal-binding</keyword>
<keyword id="KW-0521">NADP</keyword>
<keyword id="KW-0560">Oxidoreductase</keyword>
<keyword id="KW-1185">Reference proteome</keyword>
<accession>Q5YS72</accession>
<proteinExistence type="inferred from homology"/>
<protein>
    <recommendedName>
        <fullName evidence="1">1-deoxy-D-xylulose 5-phosphate reductoisomerase</fullName>
        <shortName evidence="1">DXP reductoisomerase</shortName>
        <ecNumber evidence="1">1.1.1.267</ecNumber>
    </recommendedName>
    <alternativeName>
        <fullName evidence="1">1-deoxyxylulose-5-phosphate reductoisomerase</fullName>
    </alternativeName>
    <alternativeName>
        <fullName evidence="1">2-C-methyl-D-erythritol 4-phosphate synthase</fullName>
    </alternativeName>
</protein>
<organism>
    <name type="scientific">Nocardia farcinica (strain IFM 10152)</name>
    <dbReference type="NCBI Taxonomy" id="247156"/>
    <lineage>
        <taxon>Bacteria</taxon>
        <taxon>Bacillati</taxon>
        <taxon>Actinomycetota</taxon>
        <taxon>Actinomycetes</taxon>
        <taxon>Mycobacteriales</taxon>
        <taxon>Nocardiaceae</taxon>
        <taxon>Nocardia</taxon>
    </lineage>
</organism>